<name>PYRE_CAMJJ</name>
<dbReference type="EC" id="2.4.2.10" evidence="1"/>
<dbReference type="EMBL" id="CP000538">
    <property type="protein sequence ID" value="EAQ73110.1"/>
    <property type="molecule type" value="Genomic_DNA"/>
</dbReference>
<dbReference type="RefSeq" id="WP_002869259.1">
    <property type="nucleotide sequence ID" value="NC_008787.1"/>
</dbReference>
<dbReference type="SMR" id="A1VXV5"/>
<dbReference type="KEGG" id="cjj:CJJ81176_0258"/>
<dbReference type="eggNOG" id="COG0461">
    <property type="taxonomic scope" value="Bacteria"/>
</dbReference>
<dbReference type="HOGENOM" id="CLU_074878_3_0_7"/>
<dbReference type="UniPathway" id="UPA00070">
    <property type="reaction ID" value="UER00119"/>
</dbReference>
<dbReference type="Proteomes" id="UP000000646">
    <property type="component" value="Chromosome"/>
</dbReference>
<dbReference type="GO" id="GO:0000287">
    <property type="term" value="F:magnesium ion binding"/>
    <property type="evidence" value="ECO:0007669"/>
    <property type="project" value="UniProtKB-UniRule"/>
</dbReference>
<dbReference type="GO" id="GO:0004588">
    <property type="term" value="F:orotate phosphoribosyltransferase activity"/>
    <property type="evidence" value="ECO:0007669"/>
    <property type="project" value="UniProtKB-UniRule"/>
</dbReference>
<dbReference type="GO" id="GO:0044205">
    <property type="term" value="P:'de novo' UMP biosynthetic process"/>
    <property type="evidence" value="ECO:0007669"/>
    <property type="project" value="UniProtKB-UniRule"/>
</dbReference>
<dbReference type="GO" id="GO:0019856">
    <property type="term" value="P:pyrimidine nucleobase biosynthetic process"/>
    <property type="evidence" value="ECO:0007669"/>
    <property type="project" value="InterPro"/>
</dbReference>
<dbReference type="CDD" id="cd06223">
    <property type="entry name" value="PRTases_typeI"/>
    <property type="match status" value="1"/>
</dbReference>
<dbReference type="Gene3D" id="3.40.50.2020">
    <property type="match status" value="1"/>
</dbReference>
<dbReference type="HAMAP" id="MF_01208">
    <property type="entry name" value="PyrE"/>
    <property type="match status" value="1"/>
</dbReference>
<dbReference type="InterPro" id="IPR023031">
    <property type="entry name" value="OPRT"/>
</dbReference>
<dbReference type="InterPro" id="IPR006273">
    <property type="entry name" value="Orotate_PRibTrfase_bac"/>
</dbReference>
<dbReference type="InterPro" id="IPR000836">
    <property type="entry name" value="PRibTrfase_dom"/>
</dbReference>
<dbReference type="InterPro" id="IPR029057">
    <property type="entry name" value="PRTase-like"/>
</dbReference>
<dbReference type="NCBIfam" id="TIGR01367">
    <property type="entry name" value="pyrE_Therm"/>
    <property type="match status" value="1"/>
</dbReference>
<dbReference type="PANTHER" id="PTHR19278">
    <property type="entry name" value="OROTATE PHOSPHORIBOSYLTRANSFERASE"/>
    <property type="match status" value="1"/>
</dbReference>
<dbReference type="PANTHER" id="PTHR19278:SF9">
    <property type="entry name" value="URIDINE 5'-MONOPHOSPHATE SYNTHASE"/>
    <property type="match status" value="1"/>
</dbReference>
<dbReference type="Pfam" id="PF00156">
    <property type="entry name" value="Pribosyltran"/>
    <property type="match status" value="1"/>
</dbReference>
<dbReference type="SUPFAM" id="SSF53271">
    <property type="entry name" value="PRTase-like"/>
    <property type="match status" value="1"/>
</dbReference>
<dbReference type="PROSITE" id="PS00103">
    <property type="entry name" value="PUR_PYR_PR_TRANSFER"/>
    <property type="match status" value="1"/>
</dbReference>
<organism>
    <name type="scientific">Campylobacter jejuni subsp. jejuni serotype O:23/36 (strain 81-176)</name>
    <dbReference type="NCBI Taxonomy" id="354242"/>
    <lineage>
        <taxon>Bacteria</taxon>
        <taxon>Pseudomonadati</taxon>
        <taxon>Campylobacterota</taxon>
        <taxon>Epsilonproteobacteria</taxon>
        <taxon>Campylobacterales</taxon>
        <taxon>Campylobacteraceae</taxon>
        <taxon>Campylobacter</taxon>
    </lineage>
</organism>
<protein>
    <recommendedName>
        <fullName evidence="1">Orotate phosphoribosyltransferase</fullName>
        <shortName evidence="1">OPRT</shortName>
        <shortName evidence="1">OPRTase</shortName>
        <ecNumber evidence="1">2.4.2.10</ecNumber>
    </recommendedName>
</protein>
<reference key="1">
    <citation type="submission" date="2006-12" db="EMBL/GenBank/DDBJ databases">
        <authorList>
            <person name="Fouts D.E."/>
            <person name="Nelson K.E."/>
            <person name="Sebastian Y."/>
        </authorList>
    </citation>
    <scope>NUCLEOTIDE SEQUENCE [LARGE SCALE GENOMIC DNA]</scope>
    <source>
        <strain>81-176</strain>
    </source>
</reference>
<comment type="function">
    <text evidence="1">Catalyzes the transfer of a ribosyl phosphate group from 5-phosphoribose 1-diphosphate to orotate, leading to the formation of orotidine monophosphate (OMP).</text>
</comment>
<comment type="catalytic activity">
    <reaction evidence="1">
        <text>orotidine 5'-phosphate + diphosphate = orotate + 5-phospho-alpha-D-ribose 1-diphosphate</text>
        <dbReference type="Rhea" id="RHEA:10380"/>
        <dbReference type="ChEBI" id="CHEBI:30839"/>
        <dbReference type="ChEBI" id="CHEBI:33019"/>
        <dbReference type="ChEBI" id="CHEBI:57538"/>
        <dbReference type="ChEBI" id="CHEBI:58017"/>
        <dbReference type="EC" id="2.4.2.10"/>
    </reaction>
</comment>
<comment type="cofactor">
    <cofactor evidence="1">
        <name>Mg(2+)</name>
        <dbReference type="ChEBI" id="CHEBI:18420"/>
    </cofactor>
</comment>
<comment type="pathway">
    <text evidence="1">Pyrimidine metabolism; UMP biosynthesis via de novo pathway; UMP from orotate: step 1/2.</text>
</comment>
<comment type="subunit">
    <text evidence="1">Homodimer.</text>
</comment>
<comment type="similarity">
    <text evidence="1">Belongs to the purine/pyrimidine phosphoribosyltransferase family. PyrE subfamily.</text>
</comment>
<accession>A1VXV5</accession>
<evidence type="ECO:0000255" key="1">
    <source>
        <dbReference type="HAMAP-Rule" id="MF_01208"/>
    </source>
</evidence>
<proteinExistence type="inferred from homology"/>
<keyword id="KW-0328">Glycosyltransferase</keyword>
<keyword id="KW-0460">Magnesium</keyword>
<keyword id="KW-0665">Pyrimidine biosynthesis</keyword>
<keyword id="KW-0808">Transferase</keyword>
<feature type="chain" id="PRO_1000066218" description="Orotate phosphoribosyltransferase">
    <location>
        <begin position="1"/>
        <end position="202"/>
    </location>
</feature>
<feature type="binding site" evidence="1">
    <location>
        <position position="93"/>
    </location>
    <ligand>
        <name>5-phospho-alpha-D-ribose 1-diphosphate</name>
        <dbReference type="ChEBI" id="CHEBI:58017"/>
        <note>ligand shared between dimeric partners</note>
    </ligand>
</feature>
<feature type="binding site" description="in other chain" evidence="1">
    <location>
        <begin position="113"/>
        <end position="121"/>
    </location>
    <ligand>
        <name>5-phospho-alpha-D-ribose 1-diphosphate</name>
        <dbReference type="ChEBI" id="CHEBI:58017"/>
        <note>ligand shared between dimeric partners</note>
    </ligand>
</feature>
<feature type="binding site" evidence="1">
    <location>
        <position position="117"/>
    </location>
    <ligand>
        <name>orotate</name>
        <dbReference type="ChEBI" id="CHEBI:30839"/>
    </ligand>
</feature>
<feature type="binding site" evidence="1">
    <location>
        <position position="145"/>
    </location>
    <ligand>
        <name>orotate</name>
        <dbReference type="ChEBI" id="CHEBI:30839"/>
    </ligand>
</feature>
<gene>
    <name evidence="1" type="primary">pyrE</name>
    <name type="ordered locus">CJJ81176_0258</name>
</gene>
<sequence>MNLEQIYKDCGAYLEGHFLLSSGKHSQFYLQSAKVLEDPKLAAKLCNELAKIIASYKIEFDSICSPALGGILAGYELARACSKRFIFTERVNKEMTLRRGFEVKKGEKFIICEDIITTGGSALESAKIIESLGGIVVGFAALANRGFCAVENLKSPRKDNAKLPENLPLFTLGNFEFEIYDETNCPLCKKGSKAIKPGSRGN</sequence>